<name>SYR_RHOP2</name>
<sequence length="597" mass="65298">MPDQTTSTHLFAHILARVHAVCAALTDEGALPTGTDLSRIVVEPPKDASHGDMATNAAMVLAKDAKAKPRDLAEKIAEKLRAEDQIDTVSIAGPGFINLTLKPAVWAEALRAVLDAGAGYGRSRVGGAEKVNIEYVSANPTGPMHVGHCRGAVFGDALANLLETAGYDVTREYYINDAGAQVDVLARSAFLRYREALGEDIGAIPEGLYPGDYLVPVGTALVAEHGAALKELPEPQWLPMVRAKSIAMMMEMIKADLAALAITHEVFFSERSLIEGERNRVADTIDFLRAKGDVYQGRLPPPKGAPVEDYEDREQTLFRATAYGDDVDRPLLKSDGTYTYFASDIAYHKVKFDAGFGNMVDVWGADHGGYIKRMQAAITAVTSGKGALDVKIVQLVRLLRNGEPVKMSKRSGDFVTLREVVDEVGSDAVRFMMLFRKNDAVLDFDLAKVIEQSKDNPVFYVQYGHARGHSIFRNAKELFPDLPDATEARIAFLKDANAERLTDPSELDLLRRLALFPRTVEAAALAHEPHRVAFYLYDLASEFHALWTRGRDLPHLRFIINNDAEITKARLAMVQGVVSVLASGLAILGVTAPDEMR</sequence>
<keyword id="KW-0030">Aminoacyl-tRNA synthetase</keyword>
<keyword id="KW-0067">ATP-binding</keyword>
<keyword id="KW-0963">Cytoplasm</keyword>
<keyword id="KW-0436">Ligase</keyword>
<keyword id="KW-0547">Nucleotide-binding</keyword>
<keyword id="KW-0648">Protein biosynthesis</keyword>
<keyword id="KW-1185">Reference proteome</keyword>
<organism>
    <name type="scientific">Rhodopseudomonas palustris (strain HaA2)</name>
    <dbReference type="NCBI Taxonomy" id="316058"/>
    <lineage>
        <taxon>Bacteria</taxon>
        <taxon>Pseudomonadati</taxon>
        <taxon>Pseudomonadota</taxon>
        <taxon>Alphaproteobacteria</taxon>
        <taxon>Hyphomicrobiales</taxon>
        <taxon>Nitrobacteraceae</taxon>
        <taxon>Rhodopseudomonas</taxon>
    </lineage>
</organism>
<comment type="catalytic activity">
    <reaction evidence="1">
        <text>tRNA(Arg) + L-arginine + ATP = L-arginyl-tRNA(Arg) + AMP + diphosphate</text>
        <dbReference type="Rhea" id="RHEA:20301"/>
        <dbReference type="Rhea" id="RHEA-COMP:9658"/>
        <dbReference type="Rhea" id="RHEA-COMP:9673"/>
        <dbReference type="ChEBI" id="CHEBI:30616"/>
        <dbReference type="ChEBI" id="CHEBI:32682"/>
        <dbReference type="ChEBI" id="CHEBI:33019"/>
        <dbReference type="ChEBI" id="CHEBI:78442"/>
        <dbReference type="ChEBI" id="CHEBI:78513"/>
        <dbReference type="ChEBI" id="CHEBI:456215"/>
        <dbReference type="EC" id="6.1.1.19"/>
    </reaction>
</comment>
<comment type="subunit">
    <text evidence="1">Monomer.</text>
</comment>
<comment type="subcellular location">
    <subcellularLocation>
        <location evidence="1">Cytoplasm</location>
    </subcellularLocation>
</comment>
<comment type="similarity">
    <text evidence="1">Belongs to the class-I aminoacyl-tRNA synthetase family.</text>
</comment>
<accession>Q2IWF8</accession>
<dbReference type="EC" id="6.1.1.19" evidence="1"/>
<dbReference type="EMBL" id="CP000250">
    <property type="protein sequence ID" value="ABD07452.1"/>
    <property type="molecule type" value="Genomic_DNA"/>
</dbReference>
<dbReference type="RefSeq" id="WP_011441637.1">
    <property type="nucleotide sequence ID" value="NC_007778.1"/>
</dbReference>
<dbReference type="SMR" id="Q2IWF8"/>
<dbReference type="STRING" id="316058.RPB_2750"/>
<dbReference type="KEGG" id="rpb:RPB_2750"/>
<dbReference type="eggNOG" id="COG0018">
    <property type="taxonomic scope" value="Bacteria"/>
</dbReference>
<dbReference type="HOGENOM" id="CLU_006406_0_1_5"/>
<dbReference type="OrthoDB" id="9803211at2"/>
<dbReference type="Proteomes" id="UP000008809">
    <property type="component" value="Chromosome"/>
</dbReference>
<dbReference type="GO" id="GO:0005737">
    <property type="term" value="C:cytoplasm"/>
    <property type="evidence" value="ECO:0007669"/>
    <property type="project" value="UniProtKB-SubCell"/>
</dbReference>
<dbReference type="GO" id="GO:0004814">
    <property type="term" value="F:arginine-tRNA ligase activity"/>
    <property type="evidence" value="ECO:0007669"/>
    <property type="project" value="UniProtKB-UniRule"/>
</dbReference>
<dbReference type="GO" id="GO:0005524">
    <property type="term" value="F:ATP binding"/>
    <property type="evidence" value="ECO:0007669"/>
    <property type="project" value="UniProtKB-UniRule"/>
</dbReference>
<dbReference type="GO" id="GO:0006420">
    <property type="term" value="P:arginyl-tRNA aminoacylation"/>
    <property type="evidence" value="ECO:0007669"/>
    <property type="project" value="UniProtKB-UniRule"/>
</dbReference>
<dbReference type="CDD" id="cd00671">
    <property type="entry name" value="ArgRS_core"/>
    <property type="match status" value="1"/>
</dbReference>
<dbReference type="FunFam" id="1.10.730.10:FF:000008">
    <property type="entry name" value="Arginine--tRNA ligase"/>
    <property type="match status" value="1"/>
</dbReference>
<dbReference type="FunFam" id="3.30.1360.70:FF:000003">
    <property type="entry name" value="Arginine--tRNA ligase"/>
    <property type="match status" value="1"/>
</dbReference>
<dbReference type="Gene3D" id="3.30.1360.70">
    <property type="entry name" value="Arginyl tRNA synthetase N-terminal domain"/>
    <property type="match status" value="1"/>
</dbReference>
<dbReference type="Gene3D" id="3.40.50.620">
    <property type="entry name" value="HUPs"/>
    <property type="match status" value="1"/>
</dbReference>
<dbReference type="Gene3D" id="1.10.730.10">
    <property type="entry name" value="Isoleucyl-tRNA Synthetase, Domain 1"/>
    <property type="match status" value="1"/>
</dbReference>
<dbReference type="HAMAP" id="MF_00123">
    <property type="entry name" value="Arg_tRNA_synth"/>
    <property type="match status" value="1"/>
</dbReference>
<dbReference type="InterPro" id="IPR001412">
    <property type="entry name" value="aa-tRNA-synth_I_CS"/>
</dbReference>
<dbReference type="InterPro" id="IPR001278">
    <property type="entry name" value="Arg-tRNA-ligase"/>
</dbReference>
<dbReference type="InterPro" id="IPR005148">
    <property type="entry name" value="Arg-tRNA-synth_N"/>
</dbReference>
<dbReference type="InterPro" id="IPR036695">
    <property type="entry name" value="Arg-tRNA-synth_N_sf"/>
</dbReference>
<dbReference type="InterPro" id="IPR035684">
    <property type="entry name" value="ArgRS_core"/>
</dbReference>
<dbReference type="InterPro" id="IPR008909">
    <property type="entry name" value="DALR_anticod-bd"/>
</dbReference>
<dbReference type="InterPro" id="IPR014729">
    <property type="entry name" value="Rossmann-like_a/b/a_fold"/>
</dbReference>
<dbReference type="InterPro" id="IPR009080">
    <property type="entry name" value="tRNAsynth_Ia_anticodon-bd"/>
</dbReference>
<dbReference type="NCBIfam" id="TIGR00456">
    <property type="entry name" value="argS"/>
    <property type="match status" value="1"/>
</dbReference>
<dbReference type="PANTHER" id="PTHR11956:SF5">
    <property type="entry name" value="ARGININE--TRNA LIGASE, CYTOPLASMIC"/>
    <property type="match status" value="1"/>
</dbReference>
<dbReference type="PANTHER" id="PTHR11956">
    <property type="entry name" value="ARGINYL-TRNA SYNTHETASE"/>
    <property type="match status" value="1"/>
</dbReference>
<dbReference type="Pfam" id="PF03485">
    <property type="entry name" value="Arg_tRNA_synt_N"/>
    <property type="match status" value="1"/>
</dbReference>
<dbReference type="Pfam" id="PF05746">
    <property type="entry name" value="DALR_1"/>
    <property type="match status" value="1"/>
</dbReference>
<dbReference type="Pfam" id="PF00750">
    <property type="entry name" value="tRNA-synt_1d"/>
    <property type="match status" value="1"/>
</dbReference>
<dbReference type="PRINTS" id="PR01038">
    <property type="entry name" value="TRNASYNTHARG"/>
</dbReference>
<dbReference type="SMART" id="SM01016">
    <property type="entry name" value="Arg_tRNA_synt_N"/>
    <property type="match status" value="1"/>
</dbReference>
<dbReference type="SMART" id="SM00836">
    <property type="entry name" value="DALR_1"/>
    <property type="match status" value="1"/>
</dbReference>
<dbReference type="SUPFAM" id="SSF47323">
    <property type="entry name" value="Anticodon-binding domain of a subclass of class I aminoacyl-tRNA synthetases"/>
    <property type="match status" value="1"/>
</dbReference>
<dbReference type="SUPFAM" id="SSF55190">
    <property type="entry name" value="Arginyl-tRNA synthetase (ArgRS), N-terminal 'additional' domain"/>
    <property type="match status" value="1"/>
</dbReference>
<dbReference type="SUPFAM" id="SSF52374">
    <property type="entry name" value="Nucleotidylyl transferase"/>
    <property type="match status" value="1"/>
</dbReference>
<dbReference type="PROSITE" id="PS00178">
    <property type="entry name" value="AA_TRNA_LIGASE_I"/>
    <property type="match status" value="1"/>
</dbReference>
<gene>
    <name evidence="1" type="primary">argS</name>
    <name type="ordered locus">RPB_2750</name>
</gene>
<evidence type="ECO:0000255" key="1">
    <source>
        <dbReference type="HAMAP-Rule" id="MF_00123"/>
    </source>
</evidence>
<protein>
    <recommendedName>
        <fullName evidence="1">Arginine--tRNA ligase</fullName>
        <ecNumber evidence="1">6.1.1.19</ecNumber>
    </recommendedName>
    <alternativeName>
        <fullName evidence="1">Arginyl-tRNA synthetase</fullName>
        <shortName evidence="1">ArgRS</shortName>
    </alternativeName>
</protein>
<feature type="chain" id="PRO_0000242081" description="Arginine--tRNA ligase">
    <location>
        <begin position="1"/>
        <end position="597"/>
    </location>
</feature>
<feature type="short sequence motif" description="'HIGH' region">
    <location>
        <begin position="138"/>
        <end position="148"/>
    </location>
</feature>
<reference key="1">
    <citation type="submission" date="2006-01" db="EMBL/GenBank/DDBJ databases">
        <title>Complete sequence of Rhodopseudomonas palustris HaA2.</title>
        <authorList>
            <consortium name="US DOE Joint Genome Institute"/>
            <person name="Copeland A."/>
            <person name="Lucas S."/>
            <person name="Lapidus A."/>
            <person name="Barry K."/>
            <person name="Detter J.C."/>
            <person name="Glavina T."/>
            <person name="Hammon N."/>
            <person name="Israni S."/>
            <person name="Pitluck S."/>
            <person name="Chain P."/>
            <person name="Malfatti S."/>
            <person name="Shin M."/>
            <person name="Vergez L."/>
            <person name="Schmutz J."/>
            <person name="Larimer F."/>
            <person name="Land M."/>
            <person name="Hauser L."/>
            <person name="Pelletier D.A."/>
            <person name="Kyrpides N."/>
            <person name="Anderson I."/>
            <person name="Oda Y."/>
            <person name="Harwood C.S."/>
            <person name="Richardson P."/>
        </authorList>
    </citation>
    <scope>NUCLEOTIDE SEQUENCE [LARGE SCALE GENOMIC DNA]</scope>
    <source>
        <strain>HaA2</strain>
    </source>
</reference>
<proteinExistence type="inferred from homology"/>